<proteinExistence type="evidence at protein level"/>
<name>MOM4_CAEEL</name>
<accession>Q9XTC6</accession>
<dbReference type="EC" id="2.7.11.25" evidence="4 6"/>
<dbReference type="EMBL" id="AF143242">
    <property type="protein sequence ID" value="AAD37359.1"/>
    <property type="molecule type" value="mRNA"/>
</dbReference>
<dbReference type="EMBL" id="AF145377">
    <property type="protein sequence ID" value="AAD39816.1"/>
    <property type="molecule type" value="mRNA"/>
</dbReference>
<dbReference type="EMBL" id="Z83228">
    <property type="protein sequence ID" value="CAB60998.1"/>
    <property type="molecule type" value="Genomic_DNA"/>
</dbReference>
<dbReference type="RefSeq" id="NP_492620.1">
    <property type="nucleotide sequence ID" value="NM_060219.10"/>
</dbReference>
<dbReference type="SMR" id="Q9XTC6"/>
<dbReference type="BioGRID" id="38265">
    <property type="interactions" value="12"/>
</dbReference>
<dbReference type="DIP" id="DIP-26637N"/>
<dbReference type="FunCoup" id="Q9XTC6">
    <property type="interactions" value="2182"/>
</dbReference>
<dbReference type="IntAct" id="Q9XTC6">
    <property type="interactions" value="1"/>
</dbReference>
<dbReference type="STRING" id="6239.F52F12.3.1"/>
<dbReference type="PaxDb" id="6239-F52F12.3"/>
<dbReference type="PeptideAtlas" id="Q9XTC6"/>
<dbReference type="EnsemblMetazoa" id="F52F12.3.1">
    <property type="protein sequence ID" value="F52F12.3.1"/>
    <property type="gene ID" value="WBGene00003396"/>
</dbReference>
<dbReference type="GeneID" id="172842"/>
<dbReference type="KEGG" id="cel:CELE_F52F12.3"/>
<dbReference type="UCSC" id="F52F12.3">
    <property type="organism name" value="c. elegans"/>
</dbReference>
<dbReference type="AGR" id="WB:WBGene00003396"/>
<dbReference type="CTD" id="172842"/>
<dbReference type="WormBase" id="F52F12.3">
    <property type="protein sequence ID" value="CE24994"/>
    <property type="gene ID" value="WBGene00003396"/>
    <property type="gene designation" value="mom-4"/>
</dbReference>
<dbReference type="eggNOG" id="KOG0192">
    <property type="taxonomic scope" value="Eukaryota"/>
</dbReference>
<dbReference type="GeneTree" id="ENSGT00940000170225"/>
<dbReference type="HOGENOM" id="CLU_509264_0_0_1"/>
<dbReference type="InParanoid" id="Q9XTC6"/>
<dbReference type="OMA" id="REAKVMW"/>
<dbReference type="OrthoDB" id="10013149at2759"/>
<dbReference type="PhylomeDB" id="Q9XTC6"/>
<dbReference type="SignaLink" id="Q9XTC6"/>
<dbReference type="PRO" id="PR:Q9XTC6"/>
<dbReference type="Proteomes" id="UP000001940">
    <property type="component" value="Chromosome I"/>
</dbReference>
<dbReference type="Bgee" id="WBGene00003396">
    <property type="expression patterns" value="Expressed in germ line (C elegans) and 4 other cell types or tissues"/>
</dbReference>
<dbReference type="GO" id="GO:0005737">
    <property type="term" value="C:cytoplasm"/>
    <property type="evidence" value="ECO:0007005"/>
    <property type="project" value="WormBase"/>
</dbReference>
<dbReference type="GO" id="GO:0055120">
    <property type="term" value="C:striated muscle dense body"/>
    <property type="evidence" value="ECO:0007005"/>
    <property type="project" value="WormBase"/>
</dbReference>
<dbReference type="GO" id="GO:0005524">
    <property type="term" value="F:ATP binding"/>
    <property type="evidence" value="ECO:0007669"/>
    <property type="project" value="UniProtKB-KW"/>
</dbReference>
<dbReference type="GO" id="GO:0004709">
    <property type="term" value="F:MAP kinase kinase kinase activity"/>
    <property type="evidence" value="ECO:0000314"/>
    <property type="project" value="WormBase"/>
</dbReference>
<dbReference type="GO" id="GO:0046872">
    <property type="term" value="F:metal ion binding"/>
    <property type="evidence" value="ECO:0007669"/>
    <property type="project" value="UniProtKB-KW"/>
</dbReference>
<dbReference type="GO" id="GO:0004672">
    <property type="term" value="F:protein kinase activity"/>
    <property type="evidence" value="ECO:0000318"/>
    <property type="project" value="GO_Central"/>
</dbReference>
<dbReference type="GO" id="GO:0106310">
    <property type="term" value="F:protein serine kinase activity"/>
    <property type="evidence" value="ECO:0007669"/>
    <property type="project" value="RHEA"/>
</dbReference>
<dbReference type="GO" id="GO:0004674">
    <property type="term" value="F:protein serine/threonine kinase activity"/>
    <property type="evidence" value="ECO:0000314"/>
    <property type="project" value="WormBase"/>
</dbReference>
<dbReference type="GO" id="GO:0008356">
    <property type="term" value="P:asymmetric cell division"/>
    <property type="evidence" value="ECO:0000315"/>
    <property type="project" value="WormBase"/>
</dbReference>
<dbReference type="GO" id="GO:0045167">
    <property type="term" value="P:asymmetric protein localization involved in cell fate determination"/>
    <property type="evidence" value="ECO:0000315"/>
    <property type="project" value="WormBase"/>
</dbReference>
<dbReference type="GO" id="GO:0060070">
    <property type="term" value="P:canonical Wnt signaling pathway"/>
    <property type="evidence" value="ECO:0000315"/>
    <property type="project" value="UniProtKB"/>
</dbReference>
<dbReference type="GO" id="GO:0048557">
    <property type="term" value="P:embryonic digestive tract morphogenesis"/>
    <property type="evidence" value="ECO:0000316"/>
    <property type="project" value="UniProtKB"/>
</dbReference>
<dbReference type="GO" id="GO:0007492">
    <property type="term" value="P:endoderm development"/>
    <property type="evidence" value="ECO:0000315"/>
    <property type="project" value="WormBase"/>
</dbReference>
<dbReference type="GO" id="GO:0001714">
    <property type="term" value="P:endodermal cell fate specification"/>
    <property type="evidence" value="ECO:0000315"/>
    <property type="project" value="WormBase"/>
</dbReference>
<dbReference type="GO" id="GO:0000165">
    <property type="term" value="P:MAPK cascade"/>
    <property type="evidence" value="ECO:0000314"/>
    <property type="project" value="WormBase"/>
</dbReference>
<dbReference type="GO" id="GO:0042694">
    <property type="term" value="P:muscle cell fate specification"/>
    <property type="evidence" value="ECO:0000315"/>
    <property type="project" value="WormBase"/>
</dbReference>
<dbReference type="GO" id="GO:0007165">
    <property type="term" value="P:signal transduction"/>
    <property type="evidence" value="ECO:0000318"/>
    <property type="project" value="GO_Central"/>
</dbReference>
<dbReference type="Gene3D" id="1.10.510.10">
    <property type="entry name" value="Transferase(Phosphotransferase) domain 1"/>
    <property type="match status" value="1"/>
</dbReference>
<dbReference type="InterPro" id="IPR011009">
    <property type="entry name" value="Kinase-like_dom_sf"/>
</dbReference>
<dbReference type="InterPro" id="IPR000719">
    <property type="entry name" value="Prot_kinase_dom"/>
</dbReference>
<dbReference type="InterPro" id="IPR017441">
    <property type="entry name" value="Protein_kinase_ATP_BS"/>
</dbReference>
<dbReference type="InterPro" id="IPR001245">
    <property type="entry name" value="Ser-Thr/Tyr_kinase_cat_dom"/>
</dbReference>
<dbReference type="PANTHER" id="PTHR46716">
    <property type="entry name" value="MITOGEN-ACTIVATED PROTEIN KINASE KINASE KINASE 7"/>
    <property type="match status" value="1"/>
</dbReference>
<dbReference type="PANTHER" id="PTHR46716:SF1">
    <property type="entry name" value="MITOGEN-ACTIVATED PROTEIN KINASE KINASE KINASE 7"/>
    <property type="match status" value="1"/>
</dbReference>
<dbReference type="Pfam" id="PF00069">
    <property type="entry name" value="Pkinase"/>
    <property type="match status" value="1"/>
</dbReference>
<dbReference type="PRINTS" id="PR00109">
    <property type="entry name" value="TYRKINASE"/>
</dbReference>
<dbReference type="SMART" id="SM00220">
    <property type="entry name" value="S_TKc"/>
    <property type="match status" value="1"/>
</dbReference>
<dbReference type="SUPFAM" id="SSF56112">
    <property type="entry name" value="Protein kinase-like (PK-like)"/>
    <property type="match status" value="1"/>
</dbReference>
<dbReference type="PROSITE" id="PS00107">
    <property type="entry name" value="PROTEIN_KINASE_ATP"/>
    <property type="match status" value="1"/>
</dbReference>
<dbReference type="PROSITE" id="PS50011">
    <property type="entry name" value="PROTEIN_KINASE_DOM"/>
    <property type="match status" value="1"/>
</dbReference>
<protein>
    <recommendedName>
        <fullName>Mitogen-activated protein kinase kinase kinase mom-4</fullName>
        <ecNumber evidence="4 6">2.7.11.25</ecNumber>
    </recommendedName>
</protein>
<organism>
    <name type="scientific">Caenorhabditis elegans</name>
    <dbReference type="NCBI Taxonomy" id="6239"/>
    <lineage>
        <taxon>Eukaryota</taxon>
        <taxon>Metazoa</taxon>
        <taxon>Ecdysozoa</taxon>
        <taxon>Nematoda</taxon>
        <taxon>Chromadorea</taxon>
        <taxon>Rhabditida</taxon>
        <taxon>Rhabditina</taxon>
        <taxon>Rhabditomorpha</taxon>
        <taxon>Rhabditoidea</taxon>
        <taxon>Rhabditidae</taxon>
        <taxon>Peloderinae</taxon>
        <taxon>Caenorhabditis</taxon>
    </lineage>
</organism>
<sequence>MDNSSQSKPSSSSSSHSPSPAAITPTQRTTRDSGLCSTIDIPEIQAQCIDNLNSHYLGKGTYGLVEKTRYRKTRQDDFRPAAIKYSSQLHMATLIREAKVMWDLRNHPNIIKIYGLYKSPRNGQGVVMEYMDCGSMADLLYDRTHINYTIDHVASWMFQLSSAVDFFHSNSQVHRDLKLQNMLLSDRYRTMKLCDFGTFTSMHQSMTSNRGTPITMAPEVFRCEQYNMKSDIYSIGIIMWQIIARNHPYRRDLSVPGLLYNVATANLRPQELECNPILSEFYKKCWNDNADIRPTSSECVEYFTLLKDEYPNGSVPLSDSSTNGPAETPPPHAHRPTMLGTSSGSGIGSNNRTPTASKLLNPQQPGQGHRRNRSETFVVQPDLPYPTVPGEAGASRIPKSQSEAKNFRDRAKSEQRQPHRDARPPPPFEHRRDSNDEEKHAVFMNICSNEETRPIDPDTRDEKSLEIFHQHCDNNKQYADAWVIKKEVMRAKHELIAQWPQHDHTVELLERKYYLEQEIARYRDIQDDNYFSTERM</sequence>
<comment type="function">
    <text evidence="4 5 7 8">Part of the Wnt signaling pathway essential for the specification of the mesodermal cell fate in early embryos. Stimulates the wrm-1/lit-1-dependent phosphorylation of pop-1 and plays a role in the initial nuclear accumulation of wrm-1.</text>
</comment>
<comment type="catalytic activity">
    <reaction evidence="4 6">
        <text>L-seryl-[protein] + ATP = O-phospho-L-seryl-[protein] + ADP + H(+)</text>
        <dbReference type="Rhea" id="RHEA:17989"/>
        <dbReference type="Rhea" id="RHEA-COMP:9863"/>
        <dbReference type="Rhea" id="RHEA-COMP:11604"/>
        <dbReference type="ChEBI" id="CHEBI:15378"/>
        <dbReference type="ChEBI" id="CHEBI:29999"/>
        <dbReference type="ChEBI" id="CHEBI:30616"/>
        <dbReference type="ChEBI" id="CHEBI:83421"/>
        <dbReference type="ChEBI" id="CHEBI:456216"/>
        <dbReference type="EC" id="2.7.11.25"/>
    </reaction>
</comment>
<comment type="catalytic activity">
    <reaction evidence="4 6">
        <text>L-threonyl-[protein] + ATP = O-phospho-L-threonyl-[protein] + ADP + H(+)</text>
        <dbReference type="Rhea" id="RHEA:46608"/>
        <dbReference type="Rhea" id="RHEA-COMP:11060"/>
        <dbReference type="Rhea" id="RHEA-COMP:11605"/>
        <dbReference type="ChEBI" id="CHEBI:15378"/>
        <dbReference type="ChEBI" id="CHEBI:30013"/>
        <dbReference type="ChEBI" id="CHEBI:30616"/>
        <dbReference type="ChEBI" id="CHEBI:61977"/>
        <dbReference type="ChEBI" id="CHEBI:456216"/>
        <dbReference type="EC" id="2.7.11.25"/>
    </reaction>
</comment>
<comment type="cofactor">
    <cofactor evidence="4 6">
        <name>Mg(2+)</name>
        <dbReference type="ChEBI" id="CHEBI:18420"/>
    </cofactor>
</comment>
<comment type="subunit">
    <text evidence="4 6">Interacts with, and is activated by, tap-1.</text>
</comment>
<comment type="developmental stage">
    <text evidence="5">Expressed in the embryo.</text>
</comment>
<comment type="PTM">
    <text evidence="6">May be autophosphorylated.</text>
</comment>
<comment type="disruption phenotype">
    <text evidence="8">Embryonic lethal with severely defective embryonic morphogenesis with no endoderm and excess mesoderm.</text>
</comment>
<comment type="similarity">
    <text evidence="1">Belongs to the protein kinase superfamily. STE Ser/Thr protein kinase family. MAP kinase kinase kinase subfamily.</text>
</comment>
<feature type="chain" id="PRO_0000351145" description="Mitogen-activated protein kinase kinase kinase mom-4">
    <location>
        <begin position="1"/>
        <end position="536"/>
    </location>
</feature>
<feature type="domain" description="Protein kinase" evidence="2">
    <location>
        <begin position="51"/>
        <end position="305"/>
    </location>
</feature>
<feature type="region of interest" description="Disordered" evidence="3">
    <location>
        <begin position="1"/>
        <end position="34"/>
    </location>
</feature>
<feature type="region of interest" description="Disordered" evidence="3">
    <location>
        <begin position="314"/>
        <end position="438"/>
    </location>
</feature>
<feature type="compositionally biased region" description="Low complexity" evidence="3">
    <location>
        <begin position="1"/>
        <end position="20"/>
    </location>
</feature>
<feature type="compositionally biased region" description="Polar residues" evidence="3">
    <location>
        <begin position="315"/>
        <end position="325"/>
    </location>
</feature>
<feature type="compositionally biased region" description="Polar residues" evidence="3">
    <location>
        <begin position="350"/>
        <end position="366"/>
    </location>
</feature>
<feature type="compositionally biased region" description="Basic and acidic residues" evidence="3">
    <location>
        <begin position="405"/>
        <end position="438"/>
    </location>
</feature>
<feature type="active site" description="Proton acceptor" evidence="1 2">
    <location>
        <position position="176"/>
    </location>
</feature>
<feature type="binding site" evidence="1 2">
    <location>
        <begin position="57"/>
        <end position="65"/>
    </location>
    <ligand>
        <name>ATP</name>
        <dbReference type="ChEBI" id="CHEBI:30616"/>
    </ligand>
</feature>
<feature type="binding site" evidence="1 2">
    <location>
        <position position="84"/>
    </location>
    <ligand>
        <name>ATP</name>
        <dbReference type="ChEBI" id="CHEBI:30616"/>
    </ligand>
</feature>
<reference evidence="9 10" key="1">
    <citation type="journal article" date="1999" name="Mol. Cell">
        <title>MOM-4, a MAP kinase kinase kinase-related protein, activates WRM-1/LIT-1 kinase to transduce anterior/posterior polarity signals in C. elegans.</title>
        <authorList>
            <person name="Shin T.H."/>
            <person name="Yasuda J."/>
            <person name="Rocheleau C.E."/>
            <person name="Lin R."/>
            <person name="Soto M."/>
            <person name="Bei Y."/>
            <person name="Davis R.J."/>
            <person name="Mello C.C."/>
        </authorList>
    </citation>
    <scope>NUCLEOTIDE SEQUENCE [MRNA]</scope>
    <scope>FUNCTION</scope>
    <scope>DEVELOPMENTAL STAGE</scope>
    <source>
        <strain evidence="10">Bristol N2</strain>
    </source>
</reference>
<reference evidence="9 11" key="2">
    <citation type="journal article" date="1999" name="Nature">
        <title>MAP kinase and Wnt pathways converge to downregulate an HMG-domain repressor in Caenorhabditis elegans.</title>
        <authorList>
            <person name="Meneghini M.D."/>
            <person name="Ishitani T."/>
            <person name="Carter J.C."/>
            <person name="Hisamoto N."/>
            <person name="Ninomiya-Tsuji J."/>
            <person name="Thorpe C.J."/>
            <person name="Hamill D.R."/>
            <person name="Matsumoto K."/>
            <person name="Bowerman B."/>
        </authorList>
    </citation>
    <scope>NUCLEOTIDE SEQUENCE [MRNA]</scope>
    <scope>FUNCTION</scope>
    <scope>CATALYTIC ACTIVITY</scope>
    <scope>COFACTOR</scope>
    <scope>INTERACTION WITH TAP-1</scope>
    <source>
        <strain evidence="4">Bristol N2</strain>
    </source>
</reference>
<reference evidence="12" key="3">
    <citation type="journal article" date="1998" name="Science">
        <title>Genome sequence of the nematode C. elegans: a platform for investigating biology.</title>
        <authorList>
            <consortium name="The C. elegans sequencing consortium"/>
        </authorList>
    </citation>
    <scope>NUCLEOTIDE SEQUENCE [LARGE SCALE GENOMIC DNA]</scope>
    <source>
        <strain evidence="12">Bristol N2</strain>
    </source>
</reference>
<reference evidence="9" key="4">
    <citation type="journal article" date="1997" name="Cell">
        <title>Wnt signaling polarizes an early C. elegans blastomere to distinguish endoderm from mesoderm.</title>
        <authorList>
            <person name="Thorpe C.J."/>
            <person name="Schlesinger A."/>
            <person name="Carter J.C."/>
            <person name="Bowerman B."/>
        </authorList>
    </citation>
    <scope>FUNCTION</scope>
    <scope>DISRUPTION PHENOTYPE</scope>
</reference>
<reference evidence="9" key="5">
    <citation type="journal article" date="2001" name="J. Biol. Chem.">
        <title>An evolutionarily conserved motif in the TAB1 C-terminal region is necessary for interaction with and activation of TAK1 MAPKKK.</title>
        <authorList>
            <person name="Ono K."/>
            <person name="Ohtomo T."/>
            <person name="Sato S."/>
            <person name="Sugamata Y."/>
            <person name="Suzuki M."/>
            <person name="Hisamoto N."/>
            <person name="Ninomiya-Tsuji J."/>
            <person name="Tsuchiya M."/>
            <person name="Matsumoto K."/>
        </authorList>
    </citation>
    <scope>CATALYTIC ACTIVITY</scope>
    <scope>COFACTOR</scope>
    <scope>INTERACTION WITH TAP-1</scope>
    <scope>PHOSPHORYLATION</scope>
</reference>
<reference evidence="9" key="6">
    <citation type="journal article" date="2005" name="Genes Dev.">
        <title>Wnt signaling drives WRM-1/beta-catenin asymmetries in early C. elegans embryos.</title>
        <authorList>
            <person name="Nakamura K."/>
            <person name="Kim S."/>
            <person name="Ishidate T."/>
            <person name="Bei Y."/>
            <person name="Pang K."/>
            <person name="Shirayama M."/>
            <person name="Trzepacz C."/>
            <person name="Brownell D.R."/>
            <person name="Mello C.C."/>
        </authorList>
    </citation>
    <scope>FUNCTION</scope>
</reference>
<keyword id="KW-0067">ATP-binding</keyword>
<keyword id="KW-0217">Developmental protein</keyword>
<keyword id="KW-0418">Kinase</keyword>
<keyword id="KW-0460">Magnesium</keyword>
<keyword id="KW-0479">Metal-binding</keyword>
<keyword id="KW-0547">Nucleotide-binding</keyword>
<keyword id="KW-0597">Phosphoprotein</keyword>
<keyword id="KW-1185">Reference proteome</keyword>
<keyword id="KW-0723">Serine/threonine-protein kinase</keyword>
<keyword id="KW-0808">Transferase</keyword>
<keyword id="KW-0879">Wnt signaling pathway</keyword>
<gene>
    <name evidence="11 13" type="primary">mom-4</name>
    <name type="ORF">F52F12.3</name>
</gene>
<evidence type="ECO:0000250" key="1">
    <source>
        <dbReference type="UniProtKB" id="O43318"/>
    </source>
</evidence>
<evidence type="ECO:0000255" key="2">
    <source>
        <dbReference type="PROSITE-ProRule" id="PRU00159"/>
    </source>
</evidence>
<evidence type="ECO:0000256" key="3">
    <source>
        <dbReference type="SAM" id="MobiDB-lite"/>
    </source>
</evidence>
<evidence type="ECO:0000269" key="4">
    <source>
    </source>
</evidence>
<evidence type="ECO:0000269" key="5">
    <source>
    </source>
</evidence>
<evidence type="ECO:0000269" key="6">
    <source>
    </source>
</evidence>
<evidence type="ECO:0000269" key="7">
    <source>
    </source>
</evidence>
<evidence type="ECO:0000269" key="8">
    <source>
    </source>
</evidence>
<evidence type="ECO:0000305" key="9"/>
<evidence type="ECO:0000312" key="10">
    <source>
        <dbReference type="EMBL" id="AAD37359.1"/>
    </source>
</evidence>
<evidence type="ECO:0000312" key="11">
    <source>
        <dbReference type="EMBL" id="AAD39816.1"/>
    </source>
</evidence>
<evidence type="ECO:0000312" key="12">
    <source>
        <dbReference type="EMBL" id="CAB60998.1"/>
    </source>
</evidence>
<evidence type="ECO:0000312" key="13">
    <source>
        <dbReference type="WormBase" id="F52F12.3"/>
    </source>
</evidence>